<gene>
    <name evidence="2" type="primary">rpmA</name>
    <name type="ordered locus">CA_C1259</name>
</gene>
<proteinExistence type="inferred from homology"/>
<accession>Q97JL5</accession>
<comment type="PTM">
    <text evidence="1">The N-terminus is cleaved by ribosomal processing cysteine protease Prp.</text>
</comment>
<comment type="similarity">
    <text evidence="2">Belongs to the bacterial ribosomal protein bL27 family.</text>
</comment>
<name>RL27_CLOAB</name>
<sequence length="100" mass="10803">MLSINLSLCAHKKGMGSSKNGRDSESKRLGVKASDGEFVLAGNIIVRQRGTKIHPGVNVGRGKDDTLFAKADGLVKFEKRGKDKKFASVYPVEIEQSVAE</sequence>
<dbReference type="EMBL" id="AE001437">
    <property type="protein sequence ID" value="AAK79230.1"/>
    <property type="molecule type" value="Genomic_DNA"/>
</dbReference>
<dbReference type="PIR" id="C97055">
    <property type="entry name" value="C97055"/>
</dbReference>
<dbReference type="RefSeq" id="NP_347890.1">
    <property type="nucleotide sequence ID" value="NC_003030.1"/>
</dbReference>
<dbReference type="RefSeq" id="WP_010964571.1">
    <property type="nucleotide sequence ID" value="NC_003030.1"/>
</dbReference>
<dbReference type="SMR" id="Q97JL5"/>
<dbReference type="STRING" id="272562.CA_C1259"/>
<dbReference type="GeneID" id="44997766"/>
<dbReference type="KEGG" id="cac:CA_C1259"/>
<dbReference type="PATRIC" id="fig|272562.8.peg.1459"/>
<dbReference type="eggNOG" id="COG0211">
    <property type="taxonomic scope" value="Bacteria"/>
</dbReference>
<dbReference type="HOGENOM" id="CLU_095424_4_0_9"/>
<dbReference type="OrthoDB" id="9803474at2"/>
<dbReference type="Proteomes" id="UP000000814">
    <property type="component" value="Chromosome"/>
</dbReference>
<dbReference type="GO" id="GO:0022625">
    <property type="term" value="C:cytosolic large ribosomal subunit"/>
    <property type="evidence" value="ECO:0007669"/>
    <property type="project" value="TreeGrafter"/>
</dbReference>
<dbReference type="GO" id="GO:0003735">
    <property type="term" value="F:structural constituent of ribosome"/>
    <property type="evidence" value="ECO:0007669"/>
    <property type="project" value="InterPro"/>
</dbReference>
<dbReference type="GO" id="GO:0006412">
    <property type="term" value="P:translation"/>
    <property type="evidence" value="ECO:0007669"/>
    <property type="project" value="UniProtKB-UniRule"/>
</dbReference>
<dbReference type="FunFam" id="2.40.50.100:FF:000004">
    <property type="entry name" value="50S ribosomal protein L27"/>
    <property type="match status" value="1"/>
</dbReference>
<dbReference type="Gene3D" id="2.40.50.100">
    <property type="match status" value="1"/>
</dbReference>
<dbReference type="HAMAP" id="MF_00539">
    <property type="entry name" value="Ribosomal_bL27"/>
    <property type="match status" value="1"/>
</dbReference>
<dbReference type="InterPro" id="IPR001684">
    <property type="entry name" value="Ribosomal_bL27"/>
</dbReference>
<dbReference type="InterPro" id="IPR018261">
    <property type="entry name" value="Ribosomal_bL27_CS"/>
</dbReference>
<dbReference type="NCBIfam" id="TIGR00062">
    <property type="entry name" value="L27"/>
    <property type="match status" value="1"/>
</dbReference>
<dbReference type="PANTHER" id="PTHR15893:SF0">
    <property type="entry name" value="LARGE RIBOSOMAL SUBUNIT PROTEIN BL27M"/>
    <property type="match status" value="1"/>
</dbReference>
<dbReference type="PANTHER" id="PTHR15893">
    <property type="entry name" value="RIBOSOMAL PROTEIN L27"/>
    <property type="match status" value="1"/>
</dbReference>
<dbReference type="Pfam" id="PF01016">
    <property type="entry name" value="Ribosomal_L27"/>
    <property type="match status" value="1"/>
</dbReference>
<dbReference type="PRINTS" id="PR00063">
    <property type="entry name" value="RIBOSOMALL27"/>
</dbReference>
<dbReference type="SUPFAM" id="SSF110324">
    <property type="entry name" value="Ribosomal L27 protein-like"/>
    <property type="match status" value="1"/>
</dbReference>
<dbReference type="PROSITE" id="PS00831">
    <property type="entry name" value="RIBOSOMAL_L27"/>
    <property type="match status" value="1"/>
</dbReference>
<protein>
    <recommendedName>
        <fullName evidence="2">Large ribosomal subunit protein bL27</fullName>
    </recommendedName>
    <alternativeName>
        <fullName evidence="3">50S ribosomal protein L27</fullName>
    </alternativeName>
</protein>
<evidence type="ECO:0000250" key="1">
    <source>
        <dbReference type="UniProtKB" id="Q2FXT0"/>
    </source>
</evidence>
<evidence type="ECO:0000255" key="2">
    <source>
        <dbReference type="HAMAP-Rule" id="MF_00539"/>
    </source>
</evidence>
<evidence type="ECO:0000305" key="3"/>
<organism>
    <name type="scientific">Clostridium acetobutylicum (strain ATCC 824 / DSM 792 / JCM 1419 / IAM 19013 / LMG 5710 / NBRC 13948 / NRRL B-527 / VKM B-1787 / 2291 / W)</name>
    <dbReference type="NCBI Taxonomy" id="272562"/>
    <lineage>
        <taxon>Bacteria</taxon>
        <taxon>Bacillati</taxon>
        <taxon>Bacillota</taxon>
        <taxon>Clostridia</taxon>
        <taxon>Eubacteriales</taxon>
        <taxon>Clostridiaceae</taxon>
        <taxon>Clostridium</taxon>
    </lineage>
</organism>
<reference key="1">
    <citation type="journal article" date="2001" name="J. Bacteriol.">
        <title>Genome sequence and comparative analysis of the solvent-producing bacterium Clostridium acetobutylicum.</title>
        <authorList>
            <person name="Noelling J."/>
            <person name="Breton G."/>
            <person name="Omelchenko M.V."/>
            <person name="Makarova K.S."/>
            <person name="Zeng Q."/>
            <person name="Gibson R."/>
            <person name="Lee H.M."/>
            <person name="Dubois J."/>
            <person name="Qiu D."/>
            <person name="Hitti J."/>
            <person name="Wolf Y.I."/>
            <person name="Tatusov R.L."/>
            <person name="Sabathe F."/>
            <person name="Doucette-Stamm L.A."/>
            <person name="Soucaille P."/>
            <person name="Daly M.J."/>
            <person name="Bennett G.N."/>
            <person name="Koonin E.V."/>
            <person name="Smith D.R."/>
        </authorList>
    </citation>
    <scope>NUCLEOTIDE SEQUENCE [LARGE SCALE GENOMIC DNA]</scope>
    <source>
        <strain>ATCC 824 / DSM 792 / JCM 1419 / IAM 19013 / LMG 5710 / NBRC 13948 / NRRL B-527 / VKM B-1787 / 2291 / W</strain>
    </source>
</reference>
<keyword id="KW-1185">Reference proteome</keyword>
<keyword id="KW-0687">Ribonucleoprotein</keyword>
<keyword id="KW-0689">Ribosomal protein</keyword>
<feature type="propeptide" id="PRO_0000459869" evidence="1">
    <location>
        <begin position="1"/>
        <end position="9"/>
    </location>
</feature>
<feature type="chain" id="PRO_0000181075" description="Large ribosomal subunit protein bL27">
    <location>
        <begin position="10"/>
        <end position="100"/>
    </location>
</feature>